<dbReference type="EMBL" id="AB002664">
    <property type="protein sequence ID" value="BAA25650.1"/>
    <property type="molecule type" value="mRNA"/>
</dbReference>
<dbReference type="EMBL" id="AK036379">
    <property type="protein sequence ID" value="BAC29404.1"/>
    <property type="molecule type" value="mRNA"/>
</dbReference>
<dbReference type="EMBL" id="AK137152">
    <property type="protein sequence ID" value="BAE23254.1"/>
    <property type="molecule type" value="mRNA"/>
</dbReference>
<dbReference type="EMBL" id="AK153447">
    <property type="protein sequence ID" value="BAE32002.1"/>
    <property type="molecule type" value="mRNA"/>
</dbReference>
<dbReference type="EMBL" id="AK155324">
    <property type="protein sequence ID" value="BAE33191.1"/>
    <property type="molecule type" value="mRNA"/>
</dbReference>
<dbReference type="EMBL" id="AK170839">
    <property type="protein sequence ID" value="BAE42065.1"/>
    <property type="molecule type" value="mRNA"/>
</dbReference>
<dbReference type="EMBL" id="AK171059">
    <property type="protein sequence ID" value="BAE42218.1"/>
    <property type="molecule type" value="mRNA"/>
</dbReference>
<dbReference type="EMBL" id="AK171265">
    <property type="protein sequence ID" value="BAE42353.1"/>
    <property type="molecule type" value="mRNA"/>
</dbReference>
<dbReference type="EMBL" id="BC003730">
    <property type="protein sequence ID" value="AAH03730.1"/>
    <property type="molecule type" value="mRNA"/>
</dbReference>
<dbReference type="CCDS" id="CCDS15367.1"/>
<dbReference type="RefSeq" id="NP_001407313.1">
    <property type="nucleotide sequence ID" value="NM_001420384.1"/>
</dbReference>
<dbReference type="RefSeq" id="NP_001407314.1">
    <property type="nucleotide sequence ID" value="NM_001420385.1"/>
</dbReference>
<dbReference type="RefSeq" id="NP_035007.1">
    <property type="nucleotide sequence ID" value="NM_010877.6"/>
</dbReference>
<dbReference type="RefSeq" id="XP_006529299.1">
    <property type="nucleotide sequence ID" value="XM_006529236.3"/>
</dbReference>
<dbReference type="SMR" id="O70145"/>
<dbReference type="BioGRID" id="201702">
    <property type="interactions" value="4"/>
</dbReference>
<dbReference type="FunCoup" id="O70145">
    <property type="interactions" value="425"/>
</dbReference>
<dbReference type="IntAct" id="O70145">
    <property type="interactions" value="2"/>
</dbReference>
<dbReference type="STRING" id="10090.ENSMUSP00000140404"/>
<dbReference type="iPTMnet" id="O70145"/>
<dbReference type="PhosphoSitePlus" id="O70145"/>
<dbReference type="SwissPalm" id="O70145"/>
<dbReference type="jPOST" id="O70145"/>
<dbReference type="PaxDb" id="10090-ENSMUSP00000140404"/>
<dbReference type="PeptideAtlas" id="O70145"/>
<dbReference type="ProteomicsDB" id="252650"/>
<dbReference type="Antibodypedia" id="702">
    <property type="antibodies" value="282 antibodies from 30 providers"/>
</dbReference>
<dbReference type="DNASU" id="17970"/>
<dbReference type="Ensembl" id="ENSMUST00000027754.7">
    <property type="protein sequence ID" value="ENSMUSP00000027754.7"/>
    <property type="gene ID" value="ENSMUSG00000026480.13"/>
</dbReference>
<dbReference type="Ensembl" id="ENSMUST00000186568.7">
    <property type="protein sequence ID" value="ENSMUSP00000140404.2"/>
    <property type="gene ID" value="ENSMUSG00000026480.13"/>
</dbReference>
<dbReference type="GeneID" id="17970"/>
<dbReference type="KEGG" id="mmu:17970"/>
<dbReference type="UCSC" id="uc007czm.1">
    <property type="organism name" value="mouse"/>
</dbReference>
<dbReference type="AGR" id="MGI:97284"/>
<dbReference type="CTD" id="4688"/>
<dbReference type="MGI" id="MGI:97284">
    <property type="gene designation" value="Ncf2"/>
</dbReference>
<dbReference type="VEuPathDB" id="HostDB:ENSMUSG00000026480"/>
<dbReference type="eggNOG" id="KOG4225">
    <property type="taxonomic scope" value="Eukaryota"/>
</dbReference>
<dbReference type="GeneTree" id="ENSGT00530000063843"/>
<dbReference type="HOGENOM" id="CLU_041290_0_0_1"/>
<dbReference type="InParanoid" id="O70145"/>
<dbReference type="OMA" id="YATMEDW"/>
<dbReference type="OrthoDB" id="9450131at2759"/>
<dbReference type="PhylomeDB" id="O70145"/>
<dbReference type="TreeFam" id="TF329087"/>
<dbReference type="Reactome" id="R-MMU-1222556">
    <property type="pathway name" value="ROS and RNS production in phagocytes"/>
</dbReference>
<dbReference type="Reactome" id="R-MMU-1236973">
    <property type="pathway name" value="Cross-presentation of particulate exogenous antigens (phagosomes)"/>
</dbReference>
<dbReference type="Reactome" id="R-MMU-3299685">
    <property type="pathway name" value="Detoxification of Reactive Oxygen Species"/>
</dbReference>
<dbReference type="Reactome" id="R-MMU-4420097">
    <property type="pathway name" value="VEGFA-VEGFR2 Pathway"/>
</dbReference>
<dbReference type="Reactome" id="R-MMU-5668599">
    <property type="pathway name" value="RHO GTPases Activate NADPH Oxidases"/>
</dbReference>
<dbReference type="Reactome" id="R-MMU-9013149">
    <property type="pathway name" value="RAC1 GTPase cycle"/>
</dbReference>
<dbReference type="Reactome" id="R-MMU-9013404">
    <property type="pathway name" value="RAC2 GTPase cycle"/>
</dbReference>
<dbReference type="Reactome" id="R-MMU-9013423">
    <property type="pathway name" value="RAC3 GTPase cycle"/>
</dbReference>
<dbReference type="BioGRID-ORCS" id="17970">
    <property type="hits" value="2 hits in 77 CRISPR screens"/>
</dbReference>
<dbReference type="ChiTaRS" id="Ncf2">
    <property type="organism name" value="mouse"/>
</dbReference>
<dbReference type="PRO" id="PR:O70145"/>
<dbReference type="Proteomes" id="UP000000589">
    <property type="component" value="Chromosome 1"/>
</dbReference>
<dbReference type="RNAct" id="O70145">
    <property type="molecule type" value="protein"/>
</dbReference>
<dbReference type="Bgee" id="ENSMUSG00000026480">
    <property type="expression patterns" value="Expressed in granulocyte and 66 other cell types or tissues"/>
</dbReference>
<dbReference type="ExpressionAtlas" id="O70145">
    <property type="expression patterns" value="baseline and differential"/>
</dbReference>
<dbReference type="GO" id="GO:0001669">
    <property type="term" value="C:acrosomal vesicle"/>
    <property type="evidence" value="ECO:0000314"/>
    <property type="project" value="MGI"/>
</dbReference>
<dbReference type="GO" id="GO:0005737">
    <property type="term" value="C:cytoplasm"/>
    <property type="evidence" value="ECO:0000314"/>
    <property type="project" value="MGI"/>
</dbReference>
<dbReference type="GO" id="GO:0005829">
    <property type="term" value="C:cytosol"/>
    <property type="evidence" value="ECO:0000266"/>
    <property type="project" value="MGI"/>
</dbReference>
<dbReference type="GO" id="GO:0043020">
    <property type="term" value="C:NADPH oxidase complex"/>
    <property type="evidence" value="ECO:0007669"/>
    <property type="project" value="Ensembl"/>
</dbReference>
<dbReference type="GO" id="GO:0031267">
    <property type="term" value="F:small GTPase binding"/>
    <property type="evidence" value="ECO:0000353"/>
    <property type="project" value="MGI"/>
</dbReference>
<dbReference type="GO" id="GO:0016176">
    <property type="term" value="F:superoxide-generating NADPH oxidase activator activity"/>
    <property type="evidence" value="ECO:0007669"/>
    <property type="project" value="Ensembl"/>
</dbReference>
<dbReference type="GO" id="GO:0006742">
    <property type="term" value="P:NADP catabolic process"/>
    <property type="evidence" value="ECO:0000266"/>
    <property type="project" value="MGI"/>
</dbReference>
<dbReference type="GO" id="GO:0006909">
    <property type="term" value="P:phagocytosis"/>
    <property type="evidence" value="ECO:0007669"/>
    <property type="project" value="InterPro"/>
</dbReference>
<dbReference type="GO" id="GO:0045730">
    <property type="term" value="P:respiratory burst"/>
    <property type="evidence" value="ECO:0007669"/>
    <property type="project" value="InterPro"/>
</dbReference>
<dbReference type="GO" id="GO:0042554">
    <property type="term" value="P:superoxide anion generation"/>
    <property type="evidence" value="ECO:0000314"/>
    <property type="project" value="MGI"/>
</dbReference>
<dbReference type="GO" id="GO:0006801">
    <property type="term" value="P:superoxide metabolic process"/>
    <property type="evidence" value="ECO:0000266"/>
    <property type="project" value="MGI"/>
</dbReference>
<dbReference type="CDD" id="cd06406">
    <property type="entry name" value="PB1_P67"/>
    <property type="match status" value="1"/>
</dbReference>
<dbReference type="CDD" id="cd12046">
    <property type="entry name" value="SH3_p67phox_C"/>
    <property type="match status" value="1"/>
</dbReference>
<dbReference type="CDD" id="cd11871">
    <property type="entry name" value="SH3_p67phox_N"/>
    <property type="match status" value="1"/>
</dbReference>
<dbReference type="FunFam" id="1.25.40.10:FF:000017">
    <property type="entry name" value="NADPH oxidase regulator NoxR"/>
    <property type="match status" value="1"/>
</dbReference>
<dbReference type="FunFam" id="2.30.30.40:FF:000096">
    <property type="entry name" value="Neutrophil cytosol factor 2"/>
    <property type="match status" value="1"/>
</dbReference>
<dbReference type="FunFam" id="3.10.20.90:FF:000141">
    <property type="entry name" value="Neutrophil cytosol factor 2"/>
    <property type="match status" value="1"/>
</dbReference>
<dbReference type="FunFam" id="2.30.30.40:FF:000260">
    <property type="entry name" value="neutrophil cytosol factor 2 isoform X1"/>
    <property type="match status" value="1"/>
</dbReference>
<dbReference type="Gene3D" id="3.10.20.90">
    <property type="entry name" value="Phosphatidylinositol 3-kinase Catalytic Subunit, Chain A, domain 1"/>
    <property type="match status" value="1"/>
</dbReference>
<dbReference type="Gene3D" id="2.30.30.40">
    <property type="entry name" value="SH3 Domains"/>
    <property type="match status" value="2"/>
</dbReference>
<dbReference type="Gene3D" id="1.25.40.10">
    <property type="entry name" value="Tetratricopeptide repeat domain"/>
    <property type="match status" value="1"/>
</dbReference>
<dbReference type="InterPro" id="IPR051864">
    <property type="entry name" value="NCF2_NOXA1"/>
</dbReference>
<dbReference type="InterPro" id="IPR034889">
    <property type="entry name" value="NCF2_SH3"/>
</dbReference>
<dbReference type="InterPro" id="IPR035546">
    <property type="entry name" value="p67phox_SH3_1"/>
</dbReference>
<dbReference type="InterPro" id="IPR053793">
    <property type="entry name" value="PB1-like"/>
</dbReference>
<dbReference type="InterPro" id="IPR000270">
    <property type="entry name" value="PB1_dom"/>
</dbReference>
<dbReference type="InterPro" id="IPR034885">
    <property type="entry name" value="PB1_P67"/>
</dbReference>
<dbReference type="InterPro" id="IPR036028">
    <property type="entry name" value="SH3-like_dom_sf"/>
</dbReference>
<dbReference type="InterPro" id="IPR001452">
    <property type="entry name" value="SH3_domain"/>
</dbReference>
<dbReference type="InterPro" id="IPR011990">
    <property type="entry name" value="TPR-like_helical_dom_sf"/>
</dbReference>
<dbReference type="InterPro" id="IPR019734">
    <property type="entry name" value="TPR_rpt"/>
</dbReference>
<dbReference type="PANTHER" id="PTHR15175:SF3">
    <property type="entry name" value="NEUTROPHIL CYTOSOL FACTOR 2"/>
    <property type="match status" value="1"/>
</dbReference>
<dbReference type="PANTHER" id="PTHR15175">
    <property type="entry name" value="NEUTROPHIL CYTOSOLIC FACTOR 2, NEUTROPHIL NADPH OXIDASE FACTOR 2"/>
    <property type="match status" value="1"/>
</dbReference>
<dbReference type="Pfam" id="PF00564">
    <property type="entry name" value="PB1"/>
    <property type="match status" value="1"/>
</dbReference>
<dbReference type="Pfam" id="PF00018">
    <property type="entry name" value="SH3_1"/>
    <property type="match status" value="2"/>
</dbReference>
<dbReference type="Pfam" id="PF00515">
    <property type="entry name" value="TPR_1"/>
    <property type="match status" value="1"/>
</dbReference>
<dbReference type="Pfam" id="PF13181">
    <property type="entry name" value="TPR_8"/>
    <property type="match status" value="1"/>
</dbReference>
<dbReference type="PRINTS" id="PR00499">
    <property type="entry name" value="P67PHOX"/>
</dbReference>
<dbReference type="PRINTS" id="PR00452">
    <property type="entry name" value="SH3DOMAIN"/>
</dbReference>
<dbReference type="SMART" id="SM00666">
    <property type="entry name" value="PB1"/>
    <property type="match status" value="1"/>
</dbReference>
<dbReference type="SMART" id="SM00326">
    <property type="entry name" value="SH3"/>
    <property type="match status" value="2"/>
</dbReference>
<dbReference type="SMART" id="SM00028">
    <property type="entry name" value="TPR"/>
    <property type="match status" value="3"/>
</dbReference>
<dbReference type="SUPFAM" id="SSF54277">
    <property type="entry name" value="CAD &amp; PB1 domains"/>
    <property type="match status" value="1"/>
</dbReference>
<dbReference type="SUPFAM" id="SSF50044">
    <property type="entry name" value="SH3-domain"/>
    <property type="match status" value="2"/>
</dbReference>
<dbReference type="SUPFAM" id="SSF48452">
    <property type="entry name" value="TPR-like"/>
    <property type="match status" value="1"/>
</dbReference>
<dbReference type="PROSITE" id="PS51745">
    <property type="entry name" value="PB1"/>
    <property type="match status" value="1"/>
</dbReference>
<dbReference type="PROSITE" id="PS50002">
    <property type="entry name" value="SH3"/>
    <property type="match status" value="2"/>
</dbReference>
<dbReference type="PROSITE" id="PS50005">
    <property type="entry name" value="TPR"/>
    <property type="match status" value="3"/>
</dbReference>
<dbReference type="PROSITE" id="PS50293">
    <property type="entry name" value="TPR_REGION"/>
    <property type="match status" value="1"/>
</dbReference>
<name>NCF2_MOUSE</name>
<gene>
    <name evidence="15" type="primary">Ncf2</name>
    <name type="synonym">Noxa2</name>
    <name evidence="8" type="synonym">P67phox</name>
</gene>
<sequence length="525" mass="59485">MSLAEAIRLWNEGVLAADKKDWKGALEAFSEVQDPHSRICFNIGCVNTILENLQAAEQAFTKSINRDKHSAVAYFQRGMLYYRMEKYDLAIKDLKEALTQLRGNQLIDYKILGLQFKLFACEVLYNIALMHAKKEEWKKAEEQLALATNMKSEPRHSKIDKAMESIWKQKLFEPVVIPVGRLFRPNERQVAQLAKKDYLGKATVVASVVHQDNFSGFAPLQPQSAEPPPRPKTPEIFRALEGEAHRVLFGFVPETPEELQVMPGNIVFVLKKGSDNWATVMFNGQKGLVPCNYLEPVELRIHPQSQPQEDTSPESDIPPPPNSSPPGRLQLSPGHKQKEPKELKLSVPMPYMLKVHYKYTVVMETRLGLPYSQLRNMVSKKLALSPEHTKLSYRRRDSHELLLLSEESMKDAWGQVKNYCLTLWCEHTVGDQGLIDEPIQRENSDASKQTTEPQPKEGTQVVAIFSYEAAQPEDLEFVEGDVILVLSHVNEEWLEGECKGKVGIFPKAFVEGCAAKNLEGIPREV</sequence>
<keyword id="KW-0963">Cytoplasm</keyword>
<keyword id="KW-0597">Phosphoprotein</keyword>
<keyword id="KW-1185">Reference proteome</keyword>
<keyword id="KW-0677">Repeat</keyword>
<keyword id="KW-0728">SH3 domain</keyword>
<keyword id="KW-0802">TPR repeat</keyword>
<proteinExistence type="evidence at protein level"/>
<reference evidence="11" key="1">
    <citation type="journal article" date="1998" name="Eur. J. Biochem.">
        <title>Functional modules and expression of mouse p40(phox) and p67(phox), SH3-domain-containing proteins involved in the phagocyte NADPH oxidase complex.</title>
        <authorList>
            <person name="Mizuki K."/>
            <person name="Kadomatsu K."/>
            <person name="Hata K."/>
            <person name="Ito T."/>
            <person name="Fan Q.-W."/>
            <person name="Kage Y."/>
            <person name="Fukumaki Y."/>
            <person name="Sakaki Y."/>
            <person name="Takeshige K."/>
            <person name="Sumimoto H."/>
        </authorList>
    </citation>
    <scope>NUCLEOTIDE SEQUENCE [MRNA]</scope>
    <scope>FUNCTION</scope>
    <source>
        <tissue>Myelomonocyte</tissue>
    </source>
</reference>
<reference evidence="12" key="2">
    <citation type="journal article" date="2005" name="Science">
        <title>The transcriptional landscape of the mammalian genome.</title>
        <authorList>
            <person name="Carninci P."/>
            <person name="Kasukawa T."/>
            <person name="Katayama S."/>
            <person name="Gough J."/>
            <person name="Frith M.C."/>
            <person name="Maeda N."/>
            <person name="Oyama R."/>
            <person name="Ravasi T."/>
            <person name="Lenhard B."/>
            <person name="Wells C."/>
            <person name="Kodzius R."/>
            <person name="Shimokawa K."/>
            <person name="Bajic V.B."/>
            <person name="Brenner S.E."/>
            <person name="Batalov S."/>
            <person name="Forrest A.R."/>
            <person name="Zavolan M."/>
            <person name="Davis M.J."/>
            <person name="Wilming L.G."/>
            <person name="Aidinis V."/>
            <person name="Allen J.E."/>
            <person name="Ambesi-Impiombato A."/>
            <person name="Apweiler R."/>
            <person name="Aturaliya R.N."/>
            <person name="Bailey T.L."/>
            <person name="Bansal M."/>
            <person name="Baxter L."/>
            <person name="Beisel K.W."/>
            <person name="Bersano T."/>
            <person name="Bono H."/>
            <person name="Chalk A.M."/>
            <person name="Chiu K.P."/>
            <person name="Choudhary V."/>
            <person name="Christoffels A."/>
            <person name="Clutterbuck D.R."/>
            <person name="Crowe M.L."/>
            <person name="Dalla E."/>
            <person name="Dalrymple B.P."/>
            <person name="de Bono B."/>
            <person name="Della Gatta G."/>
            <person name="di Bernardo D."/>
            <person name="Down T."/>
            <person name="Engstrom P."/>
            <person name="Fagiolini M."/>
            <person name="Faulkner G."/>
            <person name="Fletcher C.F."/>
            <person name="Fukushima T."/>
            <person name="Furuno M."/>
            <person name="Futaki S."/>
            <person name="Gariboldi M."/>
            <person name="Georgii-Hemming P."/>
            <person name="Gingeras T.R."/>
            <person name="Gojobori T."/>
            <person name="Green R.E."/>
            <person name="Gustincich S."/>
            <person name="Harbers M."/>
            <person name="Hayashi Y."/>
            <person name="Hensch T.K."/>
            <person name="Hirokawa N."/>
            <person name="Hill D."/>
            <person name="Huminiecki L."/>
            <person name="Iacono M."/>
            <person name="Ikeo K."/>
            <person name="Iwama A."/>
            <person name="Ishikawa T."/>
            <person name="Jakt M."/>
            <person name="Kanapin A."/>
            <person name="Katoh M."/>
            <person name="Kawasawa Y."/>
            <person name="Kelso J."/>
            <person name="Kitamura H."/>
            <person name="Kitano H."/>
            <person name="Kollias G."/>
            <person name="Krishnan S.P."/>
            <person name="Kruger A."/>
            <person name="Kummerfeld S.K."/>
            <person name="Kurochkin I.V."/>
            <person name="Lareau L.F."/>
            <person name="Lazarevic D."/>
            <person name="Lipovich L."/>
            <person name="Liu J."/>
            <person name="Liuni S."/>
            <person name="McWilliam S."/>
            <person name="Madan Babu M."/>
            <person name="Madera M."/>
            <person name="Marchionni L."/>
            <person name="Matsuda H."/>
            <person name="Matsuzawa S."/>
            <person name="Miki H."/>
            <person name="Mignone F."/>
            <person name="Miyake S."/>
            <person name="Morris K."/>
            <person name="Mottagui-Tabar S."/>
            <person name="Mulder N."/>
            <person name="Nakano N."/>
            <person name="Nakauchi H."/>
            <person name="Ng P."/>
            <person name="Nilsson R."/>
            <person name="Nishiguchi S."/>
            <person name="Nishikawa S."/>
            <person name="Nori F."/>
            <person name="Ohara O."/>
            <person name="Okazaki Y."/>
            <person name="Orlando V."/>
            <person name="Pang K.C."/>
            <person name="Pavan W.J."/>
            <person name="Pavesi G."/>
            <person name="Pesole G."/>
            <person name="Petrovsky N."/>
            <person name="Piazza S."/>
            <person name="Reed J."/>
            <person name="Reid J.F."/>
            <person name="Ring B.Z."/>
            <person name="Ringwald M."/>
            <person name="Rost B."/>
            <person name="Ruan Y."/>
            <person name="Salzberg S.L."/>
            <person name="Sandelin A."/>
            <person name="Schneider C."/>
            <person name="Schoenbach C."/>
            <person name="Sekiguchi K."/>
            <person name="Semple C.A."/>
            <person name="Seno S."/>
            <person name="Sessa L."/>
            <person name="Sheng Y."/>
            <person name="Shibata Y."/>
            <person name="Shimada H."/>
            <person name="Shimada K."/>
            <person name="Silva D."/>
            <person name="Sinclair B."/>
            <person name="Sperling S."/>
            <person name="Stupka E."/>
            <person name="Sugiura K."/>
            <person name="Sultana R."/>
            <person name="Takenaka Y."/>
            <person name="Taki K."/>
            <person name="Tammoja K."/>
            <person name="Tan S.L."/>
            <person name="Tang S."/>
            <person name="Taylor M.S."/>
            <person name="Tegner J."/>
            <person name="Teichmann S.A."/>
            <person name="Ueda H.R."/>
            <person name="van Nimwegen E."/>
            <person name="Verardo R."/>
            <person name="Wei C.L."/>
            <person name="Yagi K."/>
            <person name="Yamanishi H."/>
            <person name="Zabarovsky E."/>
            <person name="Zhu S."/>
            <person name="Zimmer A."/>
            <person name="Hide W."/>
            <person name="Bult C."/>
            <person name="Grimmond S.M."/>
            <person name="Teasdale R.D."/>
            <person name="Liu E.T."/>
            <person name="Brusic V."/>
            <person name="Quackenbush J."/>
            <person name="Wahlestedt C."/>
            <person name="Mattick J.S."/>
            <person name="Hume D.A."/>
            <person name="Kai C."/>
            <person name="Sasaki D."/>
            <person name="Tomaru Y."/>
            <person name="Fukuda S."/>
            <person name="Kanamori-Katayama M."/>
            <person name="Suzuki M."/>
            <person name="Aoki J."/>
            <person name="Arakawa T."/>
            <person name="Iida J."/>
            <person name="Imamura K."/>
            <person name="Itoh M."/>
            <person name="Kato T."/>
            <person name="Kawaji H."/>
            <person name="Kawagashira N."/>
            <person name="Kawashima T."/>
            <person name="Kojima M."/>
            <person name="Kondo S."/>
            <person name="Konno H."/>
            <person name="Nakano K."/>
            <person name="Ninomiya N."/>
            <person name="Nishio T."/>
            <person name="Okada M."/>
            <person name="Plessy C."/>
            <person name="Shibata K."/>
            <person name="Shiraki T."/>
            <person name="Suzuki S."/>
            <person name="Tagami M."/>
            <person name="Waki K."/>
            <person name="Watahiki A."/>
            <person name="Okamura-Oho Y."/>
            <person name="Suzuki H."/>
            <person name="Kawai J."/>
            <person name="Hayashizaki Y."/>
        </authorList>
    </citation>
    <scope>NUCLEOTIDE SEQUENCE [LARGE SCALE MRNA]</scope>
    <source>
        <strain evidence="12">C57BL/6J</strain>
        <strain evidence="14">NOD</strain>
        <tissue evidence="12">Bone</tissue>
        <tissue>Dendritic cell</tissue>
        <tissue>Macrophage</tissue>
        <tissue evidence="13">Urinary bladder</tissue>
    </source>
</reference>
<reference evidence="10" key="3">
    <citation type="journal article" date="2004" name="Genome Res.">
        <title>The status, quality, and expansion of the NIH full-length cDNA project: the Mammalian Gene Collection (MGC).</title>
        <authorList>
            <consortium name="The MGC Project Team"/>
        </authorList>
    </citation>
    <scope>NUCLEOTIDE SEQUENCE [LARGE SCALE MRNA]</scope>
    <source>
        <strain evidence="10">FVB/N</strain>
        <tissue evidence="10">Mammary gland</tissue>
    </source>
</reference>
<reference key="4">
    <citation type="journal article" date="2009" name="Immunity">
        <title>The phagosomal proteome in interferon-gamma-activated macrophages.</title>
        <authorList>
            <person name="Trost M."/>
            <person name="English L."/>
            <person name="Lemieux S."/>
            <person name="Courcelles M."/>
            <person name="Desjardins M."/>
            <person name="Thibault P."/>
        </authorList>
    </citation>
    <scope>IDENTIFICATION BY MASS SPECTROMETRY [LARGE SCALE ANALYSIS]</scope>
</reference>
<reference key="5">
    <citation type="journal article" date="2010" name="Cell">
        <title>A tissue-specific atlas of mouse protein phosphorylation and expression.</title>
        <authorList>
            <person name="Huttlin E.L."/>
            <person name="Jedrychowski M.P."/>
            <person name="Elias J.E."/>
            <person name="Goswami T."/>
            <person name="Rad R."/>
            <person name="Beausoleil S.A."/>
            <person name="Villen J."/>
            <person name="Haas W."/>
            <person name="Sowa M.E."/>
            <person name="Gygi S.P."/>
        </authorList>
    </citation>
    <scope>PHOSPHORYLATION [LARGE SCALE ANALYSIS] AT THR-233; SER-324 AND SER-398</scope>
    <scope>IDENTIFICATION BY MASS SPECTROMETRY [LARGE SCALE ANALYSIS]</scope>
    <source>
        <tissue>Brown adipose tissue</tissue>
        <tissue>Kidney</tissue>
        <tissue>Lung</tissue>
        <tissue>Spleen</tissue>
    </source>
</reference>
<reference key="6">
    <citation type="journal article" date="2011" name="Science">
        <title>A family of IFN-gamma-inducible 65-kD GTPases protects against bacterial infection.</title>
        <authorList>
            <person name="Kim B.H."/>
            <person name="Shenoy A.R."/>
            <person name="Kumar P."/>
            <person name="Das R."/>
            <person name="Tiwari S."/>
            <person name="MacMicking J.D."/>
        </authorList>
    </citation>
    <scope>INTERACTION WITH GBP7; NCF4 AND CYBB</scope>
</reference>
<feature type="chain" id="PRO_0000312227" description="Neutrophil cytosol factor 2">
    <location>
        <begin position="1"/>
        <end position="525"/>
    </location>
</feature>
<feature type="repeat" description="TPR 1" evidence="3">
    <location>
        <begin position="37"/>
        <end position="70"/>
    </location>
</feature>
<feature type="repeat" description="TPR 2" evidence="3">
    <location>
        <begin position="71"/>
        <end position="104"/>
    </location>
</feature>
<feature type="repeat" description="TPR 3" evidence="3">
    <location>
        <begin position="121"/>
        <end position="154"/>
    </location>
</feature>
<feature type="domain" description="SH3 1" evidence="4">
    <location>
        <begin position="240"/>
        <end position="299"/>
    </location>
</feature>
<feature type="domain" description="PB1" evidence="5">
    <location>
        <begin position="350"/>
        <end position="428"/>
    </location>
</feature>
<feature type="domain" description="SH3 2" evidence="4">
    <location>
        <begin position="456"/>
        <end position="515"/>
    </location>
</feature>
<feature type="region of interest" description="Disordered" evidence="6">
    <location>
        <begin position="304"/>
        <end position="343"/>
    </location>
</feature>
<feature type="region of interest" description="Disordered" evidence="6">
    <location>
        <begin position="437"/>
        <end position="457"/>
    </location>
</feature>
<feature type="modified residue" description="Phosphothreonine" evidence="16">
    <location>
        <position position="233"/>
    </location>
</feature>
<feature type="modified residue" description="Phosphoserine" evidence="16">
    <location>
        <position position="324"/>
    </location>
</feature>
<feature type="modified residue" description="Phosphoserine" evidence="16">
    <location>
        <position position="398"/>
    </location>
</feature>
<feature type="sequence conflict" description="In Ref. 2; BAE42353/BAE42218/BAE42065/BAE33191." evidence="9" ref="2">
    <original>E</original>
    <variation>A</variation>
    <location>
        <position position="31"/>
    </location>
</feature>
<feature type="sequence conflict" description="In Ref. 2; BAE32002." evidence="9" ref="2">
    <original>S</original>
    <variation>N</variation>
    <location>
        <position position="324"/>
    </location>
</feature>
<accession>O70145</accession>
<accession>Q3TC92</accession>
<accession>Q3U5S4</accession>
<evidence type="ECO:0000250" key="1">
    <source>
        <dbReference type="UniProtKB" id="P14598"/>
    </source>
</evidence>
<evidence type="ECO:0000250" key="2">
    <source>
        <dbReference type="UniProtKB" id="P19878"/>
    </source>
</evidence>
<evidence type="ECO:0000255" key="3"/>
<evidence type="ECO:0000255" key="4">
    <source>
        <dbReference type="PROSITE-ProRule" id="PRU00192"/>
    </source>
</evidence>
<evidence type="ECO:0000255" key="5">
    <source>
        <dbReference type="PROSITE-ProRule" id="PRU01081"/>
    </source>
</evidence>
<evidence type="ECO:0000256" key="6">
    <source>
        <dbReference type="SAM" id="MobiDB-lite"/>
    </source>
</evidence>
<evidence type="ECO:0000269" key="7">
    <source>
    </source>
</evidence>
<evidence type="ECO:0000303" key="8">
    <source>
    </source>
</evidence>
<evidence type="ECO:0000305" key="9"/>
<evidence type="ECO:0000312" key="10">
    <source>
        <dbReference type="EMBL" id="AAH03730.1"/>
    </source>
</evidence>
<evidence type="ECO:0000312" key="11">
    <source>
        <dbReference type="EMBL" id="BAA25650.1"/>
    </source>
</evidence>
<evidence type="ECO:0000312" key="12">
    <source>
        <dbReference type="EMBL" id="BAC29404.1"/>
    </source>
</evidence>
<evidence type="ECO:0000312" key="13">
    <source>
        <dbReference type="EMBL" id="BAE23254.1"/>
    </source>
</evidence>
<evidence type="ECO:0000312" key="14">
    <source>
        <dbReference type="EMBL" id="BAE33191.1"/>
    </source>
</evidence>
<evidence type="ECO:0000312" key="15">
    <source>
        <dbReference type="MGI" id="MGI:97284"/>
    </source>
</evidence>
<evidence type="ECO:0007744" key="16">
    <source>
    </source>
</evidence>
<comment type="function">
    <text evidence="2">NCF2, NCF1, and a membrane bound cytochrome b558 are required for activation of the latent NADPH oxidase (necessary for superoxide production).</text>
</comment>
<comment type="function">
    <text evidence="1 2">Subunit of the phagocyte NADPH oxidase complex that mediates the transfer of electrons from cytosolic NADPH to O2 to produce the superoxide anion (O2(-)). In the activated complex, electrons are first transferred from NADPH to flavin adenine dinucleotide (FAD) and subsequently transferred via two heme molecules to molecular oxygen, producing superoxide through an outer-sphere reaction. Activation of the NADPH oxidase complex is initiated by the assembly of cytosolic subunits of the NADPH oxidase complex with the core NADPH oxidase complex to form a complex at the plasma membrane or phagosomal membrane (By similarity). This activation process is initiated by phosphorylation dependent binding of the cytosolic NCF1/p47-phox subunit to the C-terminus of CYBA/p22-phox (By similarity).</text>
</comment>
<comment type="subunit">
    <text evidence="2 7">Component of the phagocyte NADPH oxidase complex composed of an obligatory core heterodimer formed by the membrane proteins CYBA and CYBB and the cytosolic regulatory subunits NCF1/p47-phox, NCF2/p67-phox, NCF4/p40-phox and the small GTPase RAC1 or RAC2. Part of a cytosolic complex composed at least by NCF1, NCF2 and NCF4 (By similarity). Interacts with NCF4 (PubMed:21551061). Interacts (via the C-terminal SH3 domain) with NCF1 (via C-terminus). Interacts with SYTL1 and RAC1. May interact with NOXO1 (By similarity). Interacts with S100A8 and calprotectin (S100A8/9) (By similarity). Interacts with GBP7 (via GB1/RHD3-type G domain) (PubMed:21551061). Interacts with CYBB; the interaction is enhanced in the presence of GBP7 (PubMed:21551061).</text>
</comment>
<comment type="interaction">
    <interactant intactId="EBI-9550667">
        <id>O70145</id>
    </interactant>
    <interactant intactId="EBI-444895">
        <id>O08709</id>
        <label>Prdx6</label>
    </interactant>
    <organismsDiffer>false</organismsDiffer>
    <experiments>3</experiments>
</comment>
<comment type="subcellular location">
    <subcellularLocation>
        <location evidence="9">Cytoplasm</location>
    </subcellularLocation>
</comment>
<comment type="domain">
    <text evidence="2">The OPR/PB1 domain mediates the association with NCF4/p40-PHOX.</text>
</comment>
<comment type="similarity">
    <text evidence="9">Belongs to the NCF2/NOXA1 family.</text>
</comment>
<protein>
    <recommendedName>
        <fullName evidence="9">Neutrophil cytosol factor 2</fullName>
        <shortName>NCF-2</shortName>
    </recommendedName>
    <alternativeName>
        <fullName>67 kDa neutrophil oxidase factor</fullName>
    </alternativeName>
    <alternativeName>
        <fullName>NADPH oxidase activator 2</fullName>
    </alternativeName>
    <alternativeName>
        <fullName>Neutrophil NADPH oxidase factor 2</fullName>
    </alternativeName>
    <alternativeName>
        <fullName>p67-phox</fullName>
    </alternativeName>
</protein>
<organism>
    <name type="scientific">Mus musculus</name>
    <name type="common">Mouse</name>
    <dbReference type="NCBI Taxonomy" id="10090"/>
    <lineage>
        <taxon>Eukaryota</taxon>
        <taxon>Metazoa</taxon>
        <taxon>Chordata</taxon>
        <taxon>Craniata</taxon>
        <taxon>Vertebrata</taxon>
        <taxon>Euteleostomi</taxon>
        <taxon>Mammalia</taxon>
        <taxon>Eutheria</taxon>
        <taxon>Euarchontoglires</taxon>
        <taxon>Glires</taxon>
        <taxon>Rodentia</taxon>
        <taxon>Myomorpha</taxon>
        <taxon>Muroidea</taxon>
        <taxon>Muridae</taxon>
        <taxon>Murinae</taxon>
        <taxon>Mus</taxon>
        <taxon>Mus</taxon>
    </lineage>
</organism>